<dbReference type="EC" id="2.7.8.26"/>
<dbReference type="EMBL" id="AE000782">
    <property type="protein sequence ID" value="AAB91192.1"/>
    <property type="status" value="ALT_INIT"/>
    <property type="molecule type" value="Genomic_DNA"/>
</dbReference>
<dbReference type="PIR" id="E69254">
    <property type="entry name" value="E69254"/>
</dbReference>
<dbReference type="RefSeq" id="WP_048064156.1">
    <property type="nucleotide sequence ID" value="NC_000917.1"/>
</dbReference>
<dbReference type="STRING" id="224325.AF_0037"/>
<dbReference type="PaxDb" id="224325-AF_0037"/>
<dbReference type="EnsemblBacteria" id="AAB91192">
    <property type="protein sequence ID" value="AAB91192"/>
    <property type="gene ID" value="AF_0037"/>
</dbReference>
<dbReference type="GeneID" id="1483247"/>
<dbReference type="KEGG" id="afu:AF_0037"/>
<dbReference type="eggNOG" id="arCOG04338">
    <property type="taxonomic scope" value="Archaea"/>
</dbReference>
<dbReference type="HOGENOM" id="CLU_057426_2_0_2"/>
<dbReference type="OrthoDB" id="11748at2157"/>
<dbReference type="PhylomeDB" id="O30198"/>
<dbReference type="UniPathway" id="UPA00148">
    <property type="reaction ID" value="UER00238"/>
</dbReference>
<dbReference type="Proteomes" id="UP000002199">
    <property type="component" value="Chromosome"/>
</dbReference>
<dbReference type="GO" id="GO:0005886">
    <property type="term" value="C:plasma membrane"/>
    <property type="evidence" value="ECO:0007669"/>
    <property type="project" value="UniProtKB-SubCell"/>
</dbReference>
<dbReference type="GO" id="GO:0051073">
    <property type="term" value="F:adenosylcobinamide-GDP ribazoletransferase activity"/>
    <property type="evidence" value="ECO:0007669"/>
    <property type="project" value="UniProtKB-UniRule"/>
</dbReference>
<dbReference type="GO" id="GO:0008818">
    <property type="term" value="F:cobalamin 5'-phosphate synthase activity"/>
    <property type="evidence" value="ECO:0007669"/>
    <property type="project" value="UniProtKB-UniRule"/>
</dbReference>
<dbReference type="GO" id="GO:0009236">
    <property type="term" value="P:cobalamin biosynthetic process"/>
    <property type="evidence" value="ECO:0007669"/>
    <property type="project" value="UniProtKB-UniRule"/>
</dbReference>
<dbReference type="HAMAP" id="MF_00719">
    <property type="entry name" value="CobS"/>
    <property type="match status" value="1"/>
</dbReference>
<dbReference type="InterPro" id="IPR003805">
    <property type="entry name" value="CobS"/>
</dbReference>
<dbReference type="NCBIfam" id="TIGR00317">
    <property type="entry name" value="cobS"/>
    <property type="match status" value="1"/>
</dbReference>
<dbReference type="PANTHER" id="PTHR34148">
    <property type="entry name" value="ADENOSYLCOBINAMIDE-GDP RIBAZOLETRANSFERASE"/>
    <property type="match status" value="1"/>
</dbReference>
<dbReference type="PANTHER" id="PTHR34148:SF1">
    <property type="entry name" value="ADENOSYLCOBINAMIDE-GDP RIBAZOLETRANSFERASE"/>
    <property type="match status" value="1"/>
</dbReference>
<dbReference type="Pfam" id="PF02654">
    <property type="entry name" value="CobS"/>
    <property type="match status" value="1"/>
</dbReference>
<organism>
    <name type="scientific">Archaeoglobus fulgidus (strain ATCC 49558 / DSM 4304 / JCM 9628 / NBRC 100126 / VC-16)</name>
    <dbReference type="NCBI Taxonomy" id="224325"/>
    <lineage>
        <taxon>Archaea</taxon>
        <taxon>Methanobacteriati</taxon>
        <taxon>Methanobacteriota</taxon>
        <taxon>Archaeoglobi</taxon>
        <taxon>Archaeoglobales</taxon>
        <taxon>Archaeoglobaceae</taxon>
        <taxon>Archaeoglobus</taxon>
    </lineage>
</organism>
<proteinExistence type="inferred from homology"/>
<feature type="chain" id="PRO_0000146906" description="Adenosylcobinamide-GDP ribazoletransferase">
    <location>
        <begin position="1"/>
        <end position="225"/>
    </location>
</feature>
<feature type="transmembrane region" description="Helical" evidence="2">
    <location>
        <begin position="34"/>
        <end position="54"/>
    </location>
</feature>
<feature type="transmembrane region" description="Helical" evidence="2">
    <location>
        <begin position="93"/>
        <end position="113"/>
    </location>
</feature>
<feature type="transmembrane region" description="Helical" evidence="2">
    <location>
        <begin position="116"/>
        <end position="136"/>
    </location>
</feature>
<feature type="transmembrane region" description="Helical" evidence="2">
    <location>
        <begin position="165"/>
        <end position="185"/>
    </location>
</feature>
<feature type="transmembrane region" description="Helical" evidence="2">
    <location>
        <begin position="204"/>
        <end position="224"/>
    </location>
</feature>
<comment type="function">
    <text evidence="1">Joins adenosylcobinamide-GDP and alpha-ribazole to generate adenosylcobalamin (Ado-cobalamin). Also synthesizes adenosylcobalamin 5'-phosphate from adenosylcobinamide-GDP and alpha-ribazole 5'-phosphate (By similarity).</text>
</comment>
<comment type="catalytic activity">
    <reaction>
        <text>alpha-ribazole + adenosylcob(III)inamide-GDP = adenosylcob(III)alamin + GMP + H(+)</text>
        <dbReference type="Rhea" id="RHEA:16049"/>
        <dbReference type="ChEBI" id="CHEBI:10329"/>
        <dbReference type="ChEBI" id="CHEBI:15378"/>
        <dbReference type="ChEBI" id="CHEBI:18408"/>
        <dbReference type="ChEBI" id="CHEBI:58115"/>
        <dbReference type="ChEBI" id="CHEBI:60487"/>
        <dbReference type="EC" id="2.7.8.26"/>
    </reaction>
</comment>
<comment type="catalytic activity">
    <reaction>
        <text>alpha-ribazole 5'-phosphate + adenosylcob(III)inamide-GDP = adenosylcob(III)alamin 5'-phosphate + GMP + H(+)</text>
        <dbReference type="Rhea" id="RHEA:23560"/>
        <dbReference type="ChEBI" id="CHEBI:15378"/>
        <dbReference type="ChEBI" id="CHEBI:57918"/>
        <dbReference type="ChEBI" id="CHEBI:58115"/>
        <dbReference type="ChEBI" id="CHEBI:60487"/>
        <dbReference type="ChEBI" id="CHEBI:60493"/>
        <dbReference type="EC" id="2.7.8.26"/>
    </reaction>
</comment>
<comment type="cofactor">
    <cofactor evidence="1">
        <name>Mg(2+)</name>
        <dbReference type="ChEBI" id="CHEBI:18420"/>
    </cofactor>
</comment>
<comment type="pathway">
    <text>Cofactor biosynthesis; adenosylcobalamin biosynthesis; adenosylcobalamin from cob(II)yrinate a,c-diamide: step 7/7.</text>
</comment>
<comment type="subcellular location">
    <subcellularLocation>
        <location evidence="1">Cell membrane</location>
        <topology evidence="1">Multi-pass membrane protein</topology>
    </subcellularLocation>
</comment>
<comment type="similarity">
    <text evidence="3">Belongs to the CobS family.</text>
</comment>
<comment type="sequence caution" evidence="3">
    <conflict type="erroneous initiation">
        <sequence resource="EMBL-CDS" id="AAB91192"/>
    </conflict>
</comment>
<gene>
    <name type="primary">cobS1</name>
    <name type="ordered locus">AF_0037</name>
</gene>
<keyword id="KW-1003">Cell membrane</keyword>
<keyword id="KW-0169">Cobalamin biosynthesis</keyword>
<keyword id="KW-0460">Magnesium</keyword>
<keyword id="KW-0472">Membrane</keyword>
<keyword id="KW-1185">Reference proteome</keyword>
<keyword id="KW-0808">Transferase</keyword>
<keyword id="KW-0812">Transmembrane</keyword>
<keyword id="KW-1133">Transmembrane helix</keyword>
<accession>O30198</accession>
<evidence type="ECO:0000250" key="1"/>
<evidence type="ECO:0000255" key="2"/>
<evidence type="ECO:0000305" key="3"/>
<protein>
    <recommendedName>
        <fullName>Adenosylcobinamide-GDP ribazoletransferase</fullName>
        <ecNumber>2.7.8.26</ecNumber>
    </recommendedName>
    <alternativeName>
        <fullName>Cobalamin synthase</fullName>
    </alternativeName>
    <alternativeName>
        <fullName>Cobalamin-5'-phosphate synthase</fullName>
    </alternativeName>
</protein>
<sequence length="225" mass="24737">MALDLLRSSLGFLTTLPVKGDVDVLRRNLWVFSFVGIFIGSVISIPAVLGFWFLCVLLYVAIEGVNHIDGLADFGDAFFAPEERKKVAIKDLNLGTGGAVFLCVYFLILFYSFQRVSAFYIIFSQVLAKFSMLLLLTTSKPAWQGMTGFMMEFARKRDVVIGSLPLLLVVLKPLAVFPLLFAITISLLVKRYAEEKFGGVSGDVVGASNCLVFAGSLLVCYFLAD</sequence>
<reference key="1">
    <citation type="journal article" date="1997" name="Nature">
        <title>The complete genome sequence of the hyperthermophilic, sulphate-reducing archaeon Archaeoglobus fulgidus.</title>
        <authorList>
            <person name="Klenk H.-P."/>
            <person name="Clayton R.A."/>
            <person name="Tomb J.-F."/>
            <person name="White O."/>
            <person name="Nelson K.E."/>
            <person name="Ketchum K.A."/>
            <person name="Dodson R.J."/>
            <person name="Gwinn M.L."/>
            <person name="Hickey E.K."/>
            <person name="Peterson J.D."/>
            <person name="Richardson D.L."/>
            <person name="Kerlavage A.R."/>
            <person name="Graham D.E."/>
            <person name="Kyrpides N.C."/>
            <person name="Fleischmann R.D."/>
            <person name="Quackenbush J."/>
            <person name="Lee N.H."/>
            <person name="Sutton G.G."/>
            <person name="Gill S.R."/>
            <person name="Kirkness E.F."/>
            <person name="Dougherty B.A."/>
            <person name="McKenney K."/>
            <person name="Adams M.D."/>
            <person name="Loftus B.J."/>
            <person name="Peterson S.N."/>
            <person name="Reich C.I."/>
            <person name="McNeil L.K."/>
            <person name="Badger J.H."/>
            <person name="Glodek A."/>
            <person name="Zhou L."/>
            <person name="Overbeek R."/>
            <person name="Gocayne J.D."/>
            <person name="Weidman J.F."/>
            <person name="McDonald L.A."/>
            <person name="Utterback T.R."/>
            <person name="Cotton M.D."/>
            <person name="Spriggs T."/>
            <person name="Artiach P."/>
            <person name="Kaine B.P."/>
            <person name="Sykes S.M."/>
            <person name="Sadow P.W."/>
            <person name="D'Andrea K.P."/>
            <person name="Bowman C."/>
            <person name="Fujii C."/>
            <person name="Garland S.A."/>
            <person name="Mason T.M."/>
            <person name="Olsen G.J."/>
            <person name="Fraser C.M."/>
            <person name="Smith H.O."/>
            <person name="Woese C.R."/>
            <person name="Venter J.C."/>
        </authorList>
    </citation>
    <scope>NUCLEOTIDE SEQUENCE [LARGE SCALE GENOMIC DNA]</scope>
    <source>
        <strain>ATCC 49558 / DSM 4304 / JCM 9628 / NBRC 100126 / VC-16</strain>
    </source>
</reference>
<name>COBS1_ARCFU</name>